<dbReference type="EC" id="7.1.1.2"/>
<dbReference type="EMBL" id="M15276">
    <property type="protein sequence ID" value="AAA79263.1"/>
    <property type="molecule type" value="Genomic_DNA"/>
</dbReference>
<dbReference type="SMR" id="P15601"/>
<dbReference type="GO" id="GO:0005743">
    <property type="term" value="C:mitochondrial inner membrane"/>
    <property type="evidence" value="ECO:0007669"/>
    <property type="project" value="UniProtKB-SubCell"/>
</dbReference>
<dbReference type="GO" id="GO:0008137">
    <property type="term" value="F:NADH dehydrogenase (ubiquinone) activity"/>
    <property type="evidence" value="ECO:0007669"/>
    <property type="project" value="UniProtKB-EC"/>
</dbReference>
<dbReference type="Gene3D" id="3.30.460.80">
    <property type="entry name" value="NADH:ubiquinone oxidoreductase, 30kDa subunit"/>
    <property type="match status" value="1"/>
</dbReference>
<dbReference type="InterPro" id="IPR037232">
    <property type="entry name" value="NADH_quin_OxRdtase_su_C/D-like"/>
</dbReference>
<dbReference type="InterPro" id="IPR001268">
    <property type="entry name" value="NADH_UbQ_OxRdtase_30kDa_su"/>
</dbReference>
<dbReference type="InterPro" id="IPR020396">
    <property type="entry name" value="NADH_UbQ_OxRdtase_CS"/>
</dbReference>
<dbReference type="Pfam" id="PF00329">
    <property type="entry name" value="Complex1_30kDa"/>
    <property type="match status" value="1"/>
</dbReference>
<dbReference type="SUPFAM" id="SSF143243">
    <property type="entry name" value="Nqo5-like"/>
    <property type="match status" value="1"/>
</dbReference>
<dbReference type="PROSITE" id="PS00542">
    <property type="entry name" value="COMPLEX1_30K"/>
    <property type="match status" value="1"/>
</dbReference>
<proteinExistence type="inferred from homology"/>
<feature type="chain" id="PRO_0000118646" description="NADH-ubiquinone oxidoreductase subunit 9">
    <location>
        <begin position="1"/>
        <end position="209"/>
    </location>
</feature>
<protein>
    <recommendedName>
        <fullName>NADH-ubiquinone oxidoreductase subunit 9</fullName>
        <ecNumber>7.1.1.2</ecNumber>
    </recommendedName>
    <alternativeName>
        <fullName>Protein P1</fullName>
    </alternativeName>
</protein>
<sequence length="209" mass="23655">MSPQRPQRAFFCSEGAKKKKKPKYRFGFPMALYFFFEKLNFSYWTSTTVSPNHYVCVLPAAASQALASVLGGELFLGKSQLVEATAFDLTGQEVAAGDFLVFLKNNGIVLSYSFYFFLLKKRITFFLHGGEKVCSVEAFYSNANWLEREISEMFGVSYLLKKDSRNLLLDYGSSFNPFLKKFPSTGHTEVVFNSFLKTTAYVQNASVEL</sequence>
<geneLocation type="mitochondrion"/>
<gene>
    <name type="primary">NAD9</name>
</gene>
<comment type="function">
    <text evidence="1">Core subunit of the mitochondrial membrane respiratory chain NADH dehydrogenase (Complex I) that is believed to belong to the minimal assembly required for catalysis. Complex I functions in the transfer of electrons from NADH to the respiratory chain. The immediate electron acceptor for the enzyme is believed to be ubiquinone (By similarity).</text>
</comment>
<comment type="catalytic activity">
    <reaction>
        <text>a ubiquinone + NADH + 5 H(+)(in) = a ubiquinol + NAD(+) + 4 H(+)(out)</text>
        <dbReference type="Rhea" id="RHEA:29091"/>
        <dbReference type="Rhea" id="RHEA-COMP:9565"/>
        <dbReference type="Rhea" id="RHEA-COMP:9566"/>
        <dbReference type="ChEBI" id="CHEBI:15378"/>
        <dbReference type="ChEBI" id="CHEBI:16389"/>
        <dbReference type="ChEBI" id="CHEBI:17976"/>
        <dbReference type="ChEBI" id="CHEBI:57540"/>
        <dbReference type="ChEBI" id="CHEBI:57945"/>
        <dbReference type="EC" id="7.1.1.2"/>
    </reaction>
</comment>
<comment type="subunit">
    <text>Complex I is composed of about 30 different subunits.</text>
</comment>
<comment type="subcellular location">
    <subcellularLocation>
        <location>Mitochondrion inner membrane</location>
    </subcellularLocation>
</comment>
<comment type="similarity">
    <text evidence="2">Belongs to the complex I 30 kDa subunit family.</text>
</comment>
<keyword id="KW-0249">Electron transport</keyword>
<keyword id="KW-0472">Membrane</keyword>
<keyword id="KW-0496">Mitochondrion</keyword>
<keyword id="KW-0999">Mitochondrion inner membrane</keyword>
<keyword id="KW-0520">NAD</keyword>
<keyword id="KW-0560">Oxidoreductase</keyword>
<keyword id="KW-0679">Respiratory chain</keyword>
<keyword id="KW-1278">Translocase</keyword>
<keyword id="KW-0813">Transport</keyword>
<keyword id="KW-0830">Ubiquinone</keyword>
<organism>
    <name type="scientific">Paramecium primaurelia</name>
    <dbReference type="NCBI Taxonomy" id="5886"/>
    <lineage>
        <taxon>Eukaryota</taxon>
        <taxon>Sar</taxon>
        <taxon>Alveolata</taxon>
        <taxon>Ciliophora</taxon>
        <taxon>Intramacronucleata</taxon>
        <taxon>Oligohymenophorea</taxon>
        <taxon>Peniculida</taxon>
        <taxon>Parameciidae</taxon>
        <taxon>Paramecium</taxon>
    </lineage>
</organism>
<reference key="1">
    <citation type="journal article" date="1986" name="Gene">
        <title>Paramecium mitochondrial DNA sequences and RNA transcripts for cytochrome oxidase subunit I, URF1, and three ORFs adjacent to the replication origin.</title>
        <authorList>
            <person name="Pritchard A.E."/>
            <person name="Seilhamer J.J."/>
            <person name="Cummings D.J."/>
        </authorList>
    </citation>
    <scope>NUCLEOTIDE SEQUENCE [GENOMIC DNA]</scope>
</reference>
<name>NDUS3_PARPR</name>
<evidence type="ECO:0000250" key="1"/>
<evidence type="ECO:0000305" key="2"/>
<accession>P15601</accession>